<comment type="function">
    <text evidence="1 3">Dioxygenase that cleaves the interphenyl C-alpha-C-beta double bond of resveratrol to yield 3,5-dihydroxybenzaldehyde and 4-hydroxybenzaldehyde (PubMed:21073977). Also cleaves piceatannol, a compound that differs from resveratrol only in the occurrence of an additional hydroxyl group, which leads to the production of 3,4-dihydroxybenzaldehyde and 3,5-hydroxybenzaldehyde (By similarity).</text>
</comment>
<comment type="catalytic activity">
    <reaction evidence="3">
        <text>trans-resveratrol + O2 = 3,5-dihydroxybenzaldehyde + 4-hydroxybenzaldehyde</text>
        <dbReference type="Rhea" id="RHEA:73735"/>
        <dbReference type="ChEBI" id="CHEBI:15379"/>
        <dbReference type="ChEBI" id="CHEBI:17597"/>
        <dbReference type="ChEBI" id="CHEBI:45713"/>
        <dbReference type="ChEBI" id="CHEBI:50204"/>
    </reaction>
    <physiologicalReaction direction="left-to-right" evidence="3">
        <dbReference type="Rhea" id="RHEA:73736"/>
    </physiologicalReaction>
</comment>
<comment type="catalytic activity">
    <reaction evidence="1">
        <text>piceatannol + O2 = 3,5-dihydroxybenzaldehyde + 3,4-dihydroxybenzaldehyde</text>
        <dbReference type="Rhea" id="RHEA:73815"/>
        <dbReference type="ChEBI" id="CHEBI:15379"/>
        <dbReference type="ChEBI" id="CHEBI:28814"/>
        <dbReference type="ChEBI" id="CHEBI:50204"/>
        <dbReference type="ChEBI" id="CHEBI:50205"/>
    </reaction>
    <physiologicalReaction direction="left-to-right" evidence="1">
        <dbReference type="Rhea" id="RHEA:73816"/>
    </physiologicalReaction>
</comment>
<comment type="cofactor">
    <cofactor evidence="2">
        <name>Fe(2+)</name>
        <dbReference type="ChEBI" id="CHEBI:29033"/>
    </cofactor>
    <text evidence="2">Binds 1 Fe(2+) ion per subunit.</text>
</comment>
<comment type="similarity">
    <text evidence="5">Belongs to the carotenoid oxygenase family.</text>
</comment>
<feature type="chain" id="PRO_0000456953" description="Resveratrol cleavage oxygenase 1">
    <location>
        <begin position="1"/>
        <end position="594"/>
    </location>
</feature>
<feature type="binding site" evidence="2">
    <location>
        <position position="125"/>
    </location>
    <ligand>
        <name>piceatannol</name>
        <dbReference type="ChEBI" id="CHEBI:28814"/>
    </ligand>
</feature>
<feature type="binding site" evidence="2">
    <location>
        <position position="125"/>
    </location>
    <ligand>
        <name>trans-resveratrol</name>
        <dbReference type="ChEBI" id="CHEBI:45713"/>
    </ligand>
</feature>
<feature type="binding site" evidence="2">
    <location>
        <position position="158"/>
    </location>
    <ligand>
        <name>piceatannol</name>
        <dbReference type="ChEBI" id="CHEBI:28814"/>
    </ligand>
</feature>
<feature type="binding site" evidence="2">
    <location>
        <position position="158"/>
    </location>
    <ligand>
        <name>trans-resveratrol</name>
        <dbReference type="ChEBI" id="CHEBI:45713"/>
    </ligand>
</feature>
<feature type="binding site" evidence="2">
    <location>
        <position position="191"/>
    </location>
    <ligand>
        <name>Fe cation</name>
        <dbReference type="ChEBI" id="CHEBI:24875"/>
        <note>catalytic</note>
    </ligand>
</feature>
<feature type="binding site" evidence="2">
    <location>
        <position position="245"/>
    </location>
    <ligand>
        <name>Fe cation</name>
        <dbReference type="ChEBI" id="CHEBI:24875"/>
        <note>catalytic</note>
    </ligand>
</feature>
<feature type="binding site" evidence="2">
    <location>
        <position position="310"/>
    </location>
    <ligand>
        <name>Fe cation</name>
        <dbReference type="ChEBI" id="CHEBI:24875"/>
        <note>catalytic</note>
    </ligand>
</feature>
<feature type="binding site" evidence="2">
    <location>
        <position position="401"/>
    </location>
    <ligand>
        <name>piceatannol</name>
        <dbReference type="ChEBI" id="CHEBI:28814"/>
    </ligand>
</feature>
<feature type="binding site" evidence="2">
    <location>
        <position position="401"/>
    </location>
    <ligand>
        <name>trans-resveratrol</name>
        <dbReference type="ChEBI" id="CHEBI:45713"/>
    </ligand>
</feature>
<feature type="binding site" evidence="2">
    <location>
        <position position="547"/>
    </location>
    <ligand>
        <name>Fe cation</name>
        <dbReference type="ChEBI" id="CHEBI:24875"/>
        <note>catalytic</note>
    </ligand>
</feature>
<gene>
    <name evidence="4" type="primary">rco1</name>
    <name type="ORF">CHGG_00230</name>
</gene>
<accession>Q2HHS4</accession>
<keyword id="KW-0223">Dioxygenase</keyword>
<keyword id="KW-0408">Iron</keyword>
<keyword id="KW-0479">Metal-binding</keyword>
<keyword id="KW-0560">Oxidoreductase</keyword>
<keyword id="KW-1185">Reference proteome</keyword>
<organism>
    <name type="scientific">Chaetomium globosum (strain ATCC 6205 / CBS 148.51 / DSM 1962 / NBRC 6347 / NRRL 1970)</name>
    <name type="common">Soil fungus</name>
    <dbReference type="NCBI Taxonomy" id="306901"/>
    <lineage>
        <taxon>Eukaryota</taxon>
        <taxon>Fungi</taxon>
        <taxon>Dikarya</taxon>
        <taxon>Ascomycota</taxon>
        <taxon>Pezizomycotina</taxon>
        <taxon>Sordariomycetes</taxon>
        <taxon>Sordariomycetidae</taxon>
        <taxon>Sordariales</taxon>
        <taxon>Chaetomiaceae</taxon>
        <taxon>Chaetomium</taxon>
    </lineage>
</organism>
<reference key="1">
    <citation type="journal article" date="2015" name="Genome Announc.">
        <title>Draft genome sequence of the cellulolytic fungus Chaetomium globosum.</title>
        <authorList>
            <person name="Cuomo C.A."/>
            <person name="Untereiner W.A."/>
            <person name="Ma L.-J."/>
            <person name="Grabherr M."/>
            <person name="Birren B.W."/>
        </authorList>
    </citation>
    <scope>NUCLEOTIDE SEQUENCE [LARGE SCALE GENOMIC DNA]</scope>
    <source>
        <strain>ATCC 6205 / CBS 148.51 / DSM 1962 / NBRC 6347 / NRRL 1970</strain>
    </source>
</reference>
<reference key="2">
    <citation type="journal article" date="2011" name="Fungal Genet. Biol.">
        <title>Cleavage of resveratrol in fungi: characterization of the enzyme Rco1 from Ustilago maydis.</title>
        <authorList>
            <person name="Brefort T."/>
            <person name="Scherzinger D."/>
            <person name="Limon M.C."/>
            <person name="Estrada A.F."/>
            <person name="Trautmann D."/>
            <person name="Mengel C."/>
            <person name="Avalos J."/>
            <person name="Al-Babili S."/>
        </authorList>
    </citation>
    <scope>FUNCTION</scope>
    <scope>CATALYTIC ACTIVITY</scope>
</reference>
<name>RCO1_CHAGB</name>
<evidence type="ECO:0000250" key="1">
    <source>
        <dbReference type="UniProtKB" id="A0A0D1E6L2"/>
    </source>
</evidence>
<evidence type="ECO:0000250" key="2">
    <source>
        <dbReference type="UniProtKB" id="Q7S860"/>
    </source>
</evidence>
<evidence type="ECO:0000269" key="3">
    <source>
    </source>
</evidence>
<evidence type="ECO:0000303" key="4">
    <source>
    </source>
</evidence>
<evidence type="ECO:0000305" key="5"/>
<sequence length="594" mass="66378">MAHIHDLAASLAPNYTANRLTTPTPTRFPRTPTFASMNKPCRFEGTVDDLEVTGTIPADLDGTFFRVQPDHRFPPLFEDDIHFNGDGAVTAVRIENGRAALRQRYVRTDRFEKEARAGRSLFGRYRNPWTDNESVKGVIRTASNTNVVFWRGVLLAMKEDGPPFAMDPVTLETLGRYDFEGQIVSPTFTAHPKVDPRTGEMVCFAYEAGGDGSDCSVDVAVWTVNGDGRKVEECWYKAPFAGMIHDCGISENWVVLALTPIKMNLERMKRGGNKFAWDPNEDQWYGVVPRRGAKSEDIIWFRADNAFHGHVAGCYELPSGEIVFDLTVADGNVFFFFPPDDNITPPDGIAKRNKLSSPTTRWIFDPKAKKSAIRTLDARDADVWVADERVKPTLTWLTNGEFSRIDERYNTKPYRHFWQAVVDPTKPYDFAACGPPAGGLFNCLGHYTWSGKNYHTGESTENGASGEGEGDGKFGLEDVYFSGPTMTFQEPTFIPREGGAEGEGYLIALLNHLDQLRNDVVIFDAQNLAKGPVAVIHLPLKLKLGLHGNWVDHRDIDAWQKRRSEDGDIGPVQVAKEPLPWQKKLAEQKGETGL</sequence>
<dbReference type="EC" id="1.13.11.-" evidence="3"/>
<dbReference type="EMBL" id="CH408029">
    <property type="protein sequence ID" value="EAQ91995.1"/>
    <property type="molecule type" value="Genomic_DNA"/>
</dbReference>
<dbReference type="RefSeq" id="XP_001219451.1">
    <property type="nucleotide sequence ID" value="XM_001219450.1"/>
</dbReference>
<dbReference type="SMR" id="Q2HHS4"/>
<dbReference type="STRING" id="306901.Q2HHS4"/>
<dbReference type="GeneID" id="4388258"/>
<dbReference type="VEuPathDB" id="FungiDB:CHGG_00230"/>
<dbReference type="eggNOG" id="KOG1285">
    <property type="taxonomic scope" value="Eukaryota"/>
</dbReference>
<dbReference type="HOGENOM" id="CLU_016472_6_0_1"/>
<dbReference type="InParanoid" id="Q2HHS4"/>
<dbReference type="OMA" id="KTEECWY"/>
<dbReference type="OrthoDB" id="1069523at2759"/>
<dbReference type="Proteomes" id="UP000001056">
    <property type="component" value="Unassembled WGS sequence"/>
</dbReference>
<dbReference type="GO" id="GO:0010436">
    <property type="term" value="F:carotenoid dioxygenase activity"/>
    <property type="evidence" value="ECO:0007669"/>
    <property type="project" value="TreeGrafter"/>
</dbReference>
<dbReference type="GO" id="GO:0046872">
    <property type="term" value="F:metal ion binding"/>
    <property type="evidence" value="ECO:0007669"/>
    <property type="project" value="UniProtKB-KW"/>
</dbReference>
<dbReference type="GO" id="GO:0016121">
    <property type="term" value="P:carotene catabolic process"/>
    <property type="evidence" value="ECO:0007669"/>
    <property type="project" value="TreeGrafter"/>
</dbReference>
<dbReference type="InterPro" id="IPR004294">
    <property type="entry name" value="Carotenoid_Oase"/>
</dbReference>
<dbReference type="PANTHER" id="PTHR10543">
    <property type="entry name" value="BETA-CAROTENE DIOXYGENASE"/>
    <property type="match status" value="1"/>
</dbReference>
<dbReference type="PANTHER" id="PTHR10543:SF89">
    <property type="entry name" value="CAROTENOID 9,10(9',10')-CLEAVAGE DIOXYGENASE 1"/>
    <property type="match status" value="1"/>
</dbReference>
<dbReference type="Pfam" id="PF03055">
    <property type="entry name" value="RPE65"/>
    <property type="match status" value="1"/>
</dbReference>
<proteinExistence type="evidence at protein level"/>
<protein>
    <recommendedName>
        <fullName evidence="4">Resveratrol cleavage oxygenase 1</fullName>
        <shortName evidence="4">RCO 1</shortName>
        <ecNumber evidence="3">1.13.11.-</ecNumber>
    </recommendedName>
</protein>